<sequence length="460" mass="49687">MVAVTGGRPPGLQDAPGAPPPAPAAEAVPSRPLARDATYGGRVYGGVGGGGCCLEFLDCVLRAMGVATPAEIMPPADFRWAARPMRRRRRGGSSSSSSSPRDREPRDGRIAANGASAAASLYTMRGNKGVNQDAMLVWENFCSKEDTIFCGVFDGHGPYGHLVSKRVRDLLPIKLSANLGRDGHKETSTNIVTSSMTEGGGTERMDRDTETPLGTEENGDYPEMFAALRTSLLRAFYVMDRDLKFHKTIDSVFSGTTAVTVIKQGHDLLIGNLGDSRAVLGTRDEYDQFFAVQLTVDLKPTIPSEAARIRERSGRIFSLPDEPDVARVWLPKYNMPGLAMARAFGDFCLKDYGLISMPDVSYHRITEKDEFVVLATDGVWDVLSNSEVVSIVSQAKSEASAARFVVESAQRAWRTRFPTSKIDDCAVVCLFLNTDARNKPPGSGIKDLANAIELGGGNLS</sequence>
<proteinExistence type="evidence at transcript level"/>
<dbReference type="EC" id="3.1.3.16"/>
<dbReference type="EMBL" id="AL663005">
    <property type="protein sequence ID" value="CAD40291.2"/>
    <property type="molecule type" value="Genomic_DNA"/>
</dbReference>
<dbReference type="EMBL" id="AP008210">
    <property type="protein sequence ID" value="BAF14379.1"/>
    <property type="molecule type" value="Genomic_DNA"/>
</dbReference>
<dbReference type="EMBL" id="AP014960">
    <property type="protein sequence ID" value="BAS88580.1"/>
    <property type="molecule type" value="Genomic_DNA"/>
</dbReference>
<dbReference type="EMBL" id="AK071295">
    <property type="status" value="NOT_ANNOTATED_CDS"/>
    <property type="molecule type" value="mRNA"/>
</dbReference>
<dbReference type="SMR" id="Q7XW27"/>
<dbReference type="FunCoup" id="Q7XW27">
    <property type="interactions" value="3"/>
</dbReference>
<dbReference type="STRING" id="39947.Q7XW27"/>
<dbReference type="PaxDb" id="39947-Q7XW27"/>
<dbReference type="EnsemblPlants" id="Os04t0321800-02">
    <property type="protein sequence ID" value="Os04t0321800-02"/>
    <property type="gene ID" value="Os04g0321800"/>
</dbReference>
<dbReference type="Gramene" id="Os04t0321800-02">
    <property type="protein sequence ID" value="Os04t0321800-02"/>
    <property type="gene ID" value="Os04g0321800"/>
</dbReference>
<dbReference type="KEGG" id="dosa:Os04g0321800"/>
<dbReference type="eggNOG" id="KOG0698">
    <property type="taxonomic scope" value="Eukaryota"/>
</dbReference>
<dbReference type="HOGENOM" id="CLU_013173_6_0_1"/>
<dbReference type="InParanoid" id="Q7XW27"/>
<dbReference type="OMA" id="NGDYPEM"/>
<dbReference type="Proteomes" id="UP000000763">
    <property type="component" value="Chromosome 4"/>
</dbReference>
<dbReference type="Proteomes" id="UP000059680">
    <property type="component" value="Chromosome 4"/>
</dbReference>
<dbReference type="ExpressionAtlas" id="Q7XW27">
    <property type="expression patterns" value="baseline and differential"/>
</dbReference>
<dbReference type="GO" id="GO:0046872">
    <property type="term" value="F:metal ion binding"/>
    <property type="evidence" value="ECO:0007669"/>
    <property type="project" value="UniProtKB-KW"/>
</dbReference>
<dbReference type="GO" id="GO:0004722">
    <property type="term" value="F:protein serine/threonine phosphatase activity"/>
    <property type="evidence" value="ECO:0000318"/>
    <property type="project" value="GO_Central"/>
</dbReference>
<dbReference type="GO" id="GO:1902531">
    <property type="term" value="P:regulation of intracellular signal transduction"/>
    <property type="evidence" value="ECO:0000318"/>
    <property type="project" value="GO_Central"/>
</dbReference>
<dbReference type="CDD" id="cd00143">
    <property type="entry name" value="PP2Cc"/>
    <property type="match status" value="1"/>
</dbReference>
<dbReference type="FunFam" id="3.60.40.10:FF:000024">
    <property type="entry name" value="probable protein phosphatase 2C 33"/>
    <property type="match status" value="1"/>
</dbReference>
<dbReference type="Gene3D" id="3.60.40.10">
    <property type="entry name" value="PPM-type phosphatase domain"/>
    <property type="match status" value="1"/>
</dbReference>
<dbReference type="InterPro" id="IPR015655">
    <property type="entry name" value="PP2C"/>
</dbReference>
<dbReference type="InterPro" id="IPR036457">
    <property type="entry name" value="PPM-type-like_dom_sf"/>
</dbReference>
<dbReference type="InterPro" id="IPR001932">
    <property type="entry name" value="PPM-type_phosphatase-like_dom"/>
</dbReference>
<dbReference type="PANTHER" id="PTHR47992">
    <property type="entry name" value="PROTEIN PHOSPHATASE"/>
    <property type="match status" value="1"/>
</dbReference>
<dbReference type="Pfam" id="PF00481">
    <property type="entry name" value="PP2C"/>
    <property type="match status" value="1"/>
</dbReference>
<dbReference type="SMART" id="SM00332">
    <property type="entry name" value="PP2Cc"/>
    <property type="match status" value="1"/>
</dbReference>
<dbReference type="SUPFAM" id="SSF81606">
    <property type="entry name" value="PP2C-like"/>
    <property type="match status" value="1"/>
</dbReference>
<dbReference type="PROSITE" id="PS51746">
    <property type="entry name" value="PPM_2"/>
    <property type="match status" value="1"/>
</dbReference>
<feature type="chain" id="PRO_0000363285" description="Probable protein phosphatase 2C 38">
    <location>
        <begin position="1"/>
        <end position="460"/>
    </location>
</feature>
<feature type="domain" description="PPM-type phosphatase" evidence="2">
    <location>
        <begin position="118"/>
        <end position="432"/>
    </location>
</feature>
<feature type="region of interest" description="Disordered" evidence="3">
    <location>
        <begin position="1"/>
        <end position="30"/>
    </location>
</feature>
<feature type="region of interest" description="Disordered" evidence="3">
    <location>
        <begin position="83"/>
        <end position="111"/>
    </location>
</feature>
<feature type="region of interest" description="Disordered" evidence="3">
    <location>
        <begin position="192"/>
        <end position="219"/>
    </location>
</feature>
<feature type="compositionally biased region" description="Basic and acidic residues" evidence="3">
    <location>
        <begin position="100"/>
        <end position="109"/>
    </location>
</feature>
<feature type="compositionally biased region" description="Basic and acidic residues" evidence="3">
    <location>
        <begin position="201"/>
        <end position="210"/>
    </location>
</feature>
<feature type="binding site" evidence="1">
    <location>
        <position position="154"/>
    </location>
    <ligand>
        <name>Mn(2+)</name>
        <dbReference type="ChEBI" id="CHEBI:29035"/>
        <label>1</label>
    </ligand>
</feature>
<feature type="binding site" evidence="1">
    <location>
        <position position="154"/>
    </location>
    <ligand>
        <name>Mn(2+)</name>
        <dbReference type="ChEBI" id="CHEBI:29035"/>
        <label>2</label>
    </ligand>
</feature>
<feature type="binding site" evidence="1">
    <location>
        <position position="155"/>
    </location>
    <ligand>
        <name>Mn(2+)</name>
        <dbReference type="ChEBI" id="CHEBI:29035"/>
        <label>1</label>
    </ligand>
</feature>
<feature type="binding site" evidence="1">
    <location>
        <position position="377"/>
    </location>
    <ligand>
        <name>Mn(2+)</name>
        <dbReference type="ChEBI" id="CHEBI:29035"/>
        <label>2</label>
    </ligand>
</feature>
<feature type="binding site" evidence="1">
    <location>
        <position position="423"/>
    </location>
    <ligand>
        <name>Mn(2+)</name>
        <dbReference type="ChEBI" id="CHEBI:29035"/>
        <label>2</label>
    </ligand>
</feature>
<reference key="1">
    <citation type="journal article" date="2002" name="Nature">
        <title>Sequence and analysis of rice chromosome 4.</title>
        <authorList>
            <person name="Feng Q."/>
            <person name="Zhang Y."/>
            <person name="Hao P."/>
            <person name="Wang S."/>
            <person name="Fu G."/>
            <person name="Huang Y."/>
            <person name="Li Y."/>
            <person name="Zhu J."/>
            <person name="Liu Y."/>
            <person name="Hu X."/>
            <person name="Jia P."/>
            <person name="Zhang Y."/>
            <person name="Zhao Q."/>
            <person name="Ying K."/>
            <person name="Yu S."/>
            <person name="Tang Y."/>
            <person name="Weng Q."/>
            <person name="Zhang L."/>
            <person name="Lu Y."/>
            <person name="Mu J."/>
            <person name="Lu Y."/>
            <person name="Zhang L.S."/>
            <person name="Yu Z."/>
            <person name="Fan D."/>
            <person name="Liu X."/>
            <person name="Lu T."/>
            <person name="Li C."/>
            <person name="Wu Y."/>
            <person name="Sun T."/>
            <person name="Lei H."/>
            <person name="Li T."/>
            <person name="Hu H."/>
            <person name="Guan J."/>
            <person name="Wu M."/>
            <person name="Zhang R."/>
            <person name="Zhou B."/>
            <person name="Chen Z."/>
            <person name="Chen L."/>
            <person name="Jin Z."/>
            <person name="Wang R."/>
            <person name="Yin H."/>
            <person name="Cai Z."/>
            <person name="Ren S."/>
            <person name="Lv G."/>
            <person name="Gu W."/>
            <person name="Zhu G."/>
            <person name="Tu Y."/>
            <person name="Jia J."/>
            <person name="Zhang Y."/>
            <person name="Chen J."/>
            <person name="Kang H."/>
            <person name="Chen X."/>
            <person name="Shao C."/>
            <person name="Sun Y."/>
            <person name="Hu Q."/>
            <person name="Zhang X."/>
            <person name="Zhang W."/>
            <person name="Wang L."/>
            <person name="Ding C."/>
            <person name="Sheng H."/>
            <person name="Gu J."/>
            <person name="Chen S."/>
            <person name="Ni L."/>
            <person name="Zhu F."/>
            <person name="Chen W."/>
            <person name="Lan L."/>
            <person name="Lai Y."/>
            <person name="Cheng Z."/>
            <person name="Gu M."/>
            <person name="Jiang J."/>
            <person name="Li J."/>
            <person name="Hong G."/>
            <person name="Xue Y."/>
            <person name="Han B."/>
        </authorList>
    </citation>
    <scope>NUCLEOTIDE SEQUENCE [LARGE SCALE GENOMIC DNA]</scope>
    <source>
        <strain>cv. Nipponbare</strain>
    </source>
</reference>
<reference key="2">
    <citation type="journal article" date="2005" name="Nature">
        <title>The map-based sequence of the rice genome.</title>
        <authorList>
            <consortium name="International rice genome sequencing project (IRGSP)"/>
        </authorList>
    </citation>
    <scope>NUCLEOTIDE SEQUENCE [LARGE SCALE GENOMIC DNA]</scope>
    <source>
        <strain>cv. Nipponbare</strain>
    </source>
</reference>
<reference key="3">
    <citation type="journal article" date="2008" name="Nucleic Acids Res.">
        <title>The rice annotation project database (RAP-DB): 2008 update.</title>
        <authorList>
            <consortium name="The rice annotation project (RAP)"/>
        </authorList>
    </citation>
    <scope>GENOME REANNOTATION</scope>
    <source>
        <strain>cv. Nipponbare</strain>
    </source>
</reference>
<reference key="4">
    <citation type="journal article" date="2013" name="Rice">
        <title>Improvement of the Oryza sativa Nipponbare reference genome using next generation sequence and optical map data.</title>
        <authorList>
            <person name="Kawahara Y."/>
            <person name="de la Bastide M."/>
            <person name="Hamilton J.P."/>
            <person name="Kanamori H."/>
            <person name="McCombie W.R."/>
            <person name="Ouyang S."/>
            <person name="Schwartz D.C."/>
            <person name="Tanaka T."/>
            <person name="Wu J."/>
            <person name="Zhou S."/>
            <person name="Childs K.L."/>
            <person name="Davidson R.M."/>
            <person name="Lin H."/>
            <person name="Quesada-Ocampo L."/>
            <person name="Vaillancourt B."/>
            <person name="Sakai H."/>
            <person name="Lee S.S."/>
            <person name="Kim J."/>
            <person name="Numa H."/>
            <person name="Itoh T."/>
            <person name="Buell C.R."/>
            <person name="Matsumoto T."/>
        </authorList>
    </citation>
    <scope>GENOME REANNOTATION</scope>
    <source>
        <strain>cv. Nipponbare</strain>
    </source>
</reference>
<reference key="5">
    <citation type="journal article" date="2003" name="Science">
        <title>Collection, mapping, and annotation of over 28,000 cDNA clones from japonica rice.</title>
        <authorList>
            <consortium name="The rice full-length cDNA consortium"/>
        </authorList>
    </citation>
    <scope>NUCLEOTIDE SEQUENCE [LARGE SCALE MRNA]</scope>
    <source>
        <strain>cv. Nipponbare</strain>
    </source>
</reference>
<reference key="6">
    <citation type="journal article" date="2008" name="BMC Genomics">
        <title>Genome-wide and expression analysis of protein phosphatase 2C in rice and Arabidopsis.</title>
        <authorList>
            <person name="Xue T."/>
            <person name="Wang D."/>
            <person name="Zhang S."/>
            <person name="Ehlting J."/>
            <person name="Ni F."/>
            <person name="Jacab S."/>
            <person name="Zheng C."/>
            <person name="Zhong Y."/>
        </authorList>
    </citation>
    <scope>GENE FAMILY</scope>
    <scope>NOMENCLATURE</scope>
</reference>
<comment type="catalytic activity">
    <reaction>
        <text>O-phospho-L-seryl-[protein] + H2O = L-seryl-[protein] + phosphate</text>
        <dbReference type="Rhea" id="RHEA:20629"/>
        <dbReference type="Rhea" id="RHEA-COMP:9863"/>
        <dbReference type="Rhea" id="RHEA-COMP:11604"/>
        <dbReference type="ChEBI" id="CHEBI:15377"/>
        <dbReference type="ChEBI" id="CHEBI:29999"/>
        <dbReference type="ChEBI" id="CHEBI:43474"/>
        <dbReference type="ChEBI" id="CHEBI:83421"/>
        <dbReference type="EC" id="3.1.3.16"/>
    </reaction>
</comment>
<comment type="catalytic activity">
    <reaction>
        <text>O-phospho-L-threonyl-[protein] + H2O = L-threonyl-[protein] + phosphate</text>
        <dbReference type="Rhea" id="RHEA:47004"/>
        <dbReference type="Rhea" id="RHEA-COMP:11060"/>
        <dbReference type="Rhea" id="RHEA-COMP:11605"/>
        <dbReference type="ChEBI" id="CHEBI:15377"/>
        <dbReference type="ChEBI" id="CHEBI:30013"/>
        <dbReference type="ChEBI" id="CHEBI:43474"/>
        <dbReference type="ChEBI" id="CHEBI:61977"/>
        <dbReference type="EC" id="3.1.3.16"/>
    </reaction>
</comment>
<comment type="cofactor">
    <cofactor evidence="1">
        <name>Mg(2+)</name>
        <dbReference type="ChEBI" id="CHEBI:18420"/>
    </cofactor>
    <cofactor evidence="1">
        <name>Mn(2+)</name>
        <dbReference type="ChEBI" id="CHEBI:29035"/>
    </cofactor>
    <text evidence="1">Binds 2 magnesium or manganese ions per subunit.</text>
</comment>
<comment type="similarity">
    <text evidence="4">Belongs to the PP2C family.</text>
</comment>
<comment type="sequence caution" evidence="4">
    <conflict type="miscellaneous discrepancy">
        <sequence resource="EMBL" id="AK071295"/>
    </conflict>
    <text>Sequencing errors.</text>
</comment>
<gene>
    <name type="ordered locus">Os04g0321800</name>
    <name type="ordered locus">LOC_Os04g25570</name>
    <name type="ORF">OSJNBb0062H02.4</name>
</gene>
<evidence type="ECO:0000250" key="1"/>
<evidence type="ECO:0000255" key="2">
    <source>
        <dbReference type="PROSITE-ProRule" id="PRU01082"/>
    </source>
</evidence>
<evidence type="ECO:0000256" key="3">
    <source>
        <dbReference type="SAM" id="MobiDB-lite"/>
    </source>
</evidence>
<evidence type="ECO:0000305" key="4"/>
<name>P2C38_ORYSJ</name>
<organism>
    <name type="scientific">Oryza sativa subsp. japonica</name>
    <name type="common">Rice</name>
    <dbReference type="NCBI Taxonomy" id="39947"/>
    <lineage>
        <taxon>Eukaryota</taxon>
        <taxon>Viridiplantae</taxon>
        <taxon>Streptophyta</taxon>
        <taxon>Embryophyta</taxon>
        <taxon>Tracheophyta</taxon>
        <taxon>Spermatophyta</taxon>
        <taxon>Magnoliopsida</taxon>
        <taxon>Liliopsida</taxon>
        <taxon>Poales</taxon>
        <taxon>Poaceae</taxon>
        <taxon>BOP clade</taxon>
        <taxon>Oryzoideae</taxon>
        <taxon>Oryzeae</taxon>
        <taxon>Oryzinae</taxon>
        <taxon>Oryza</taxon>
        <taxon>Oryza sativa</taxon>
    </lineage>
</organism>
<keyword id="KW-0378">Hydrolase</keyword>
<keyword id="KW-0460">Magnesium</keyword>
<keyword id="KW-0464">Manganese</keyword>
<keyword id="KW-0479">Metal-binding</keyword>
<keyword id="KW-0904">Protein phosphatase</keyword>
<keyword id="KW-1185">Reference proteome</keyword>
<accession>Q7XW27</accession>
<accession>A0A0P0W8P1</accession>
<protein>
    <recommendedName>
        <fullName>Probable protein phosphatase 2C 38</fullName>
        <shortName>OsPP2C38</shortName>
        <ecNumber>3.1.3.16</ecNumber>
    </recommendedName>
</protein>